<feature type="signal peptide" evidence="2">
    <location>
        <begin position="1"/>
        <end position="20"/>
    </location>
</feature>
<feature type="propeptide" id="PRO_0000340304" evidence="6">
    <location>
        <begin position="21"/>
        <end position="188"/>
    </location>
</feature>
<feature type="chain" id="PRO_0000340305" description="Zinc metalloproteinase-disintegrin-like HV1">
    <location>
        <begin position="189"/>
        <end position="612"/>
    </location>
</feature>
<feature type="domain" description="Peptidase M12B" evidence="4">
    <location>
        <begin position="200"/>
        <end position="396"/>
    </location>
</feature>
<feature type="domain" description="Disintegrin" evidence="3">
    <location>
        <begin position="404"/>
        <end position="489"/>
    </location>
</feature>
<feature type="short sequence motif" description="D/ECD-tripeptide">
    <location>
        <begin position="468"/>
        <end position="470"/>
    </location>
</feature>
<feature type="active site" evidence="4 5">
    <location>
        <position position="337"/>
    </location>
</feature>
<feature type="binding site" evidence="1">
    <location>
        <position position="336"/>
    </location>
    <ligand>
        <name>Zn(2+)</name>
        <dbReference type="ChEBI" id="CHEBI:29105"/>
        <note>catalytic</note>
    </ligand>
</feature>
<feature type="binding site" evidence="1">
    <location>
        <position position="340"/>
    </location>
    <ligand>
        <name>Zn(2+)</name>
        <dbReference type="ChEBI" id="CHEBI:29105"/>
        <note>catalytic</note>
    </ligand>
</feature>
<feature type="binding site" evidence="1">
    <location>
        <position position="346"/>
    </location>
    <ligand>
        <name>Zn(2+)</name>
        <dbReference type="ChEBI" id="CHEBI:29105"/>
        <note>catalytic</note>
    </ligand>
</feature>
<feature type="binding site" evidence="1">
    <location>
        <position position="406"/>
    </location>
    <ligand>
        <name>Ca(2+)</name>
        <dbReference type="ChEBI" id="CHEBI:29108"/>
        <label>1</label>
    </ligand>
</feature>
<feature type="binding site" evidence="1">
    <location>
        <position position="409"/>
    </location>
    <ligand>
        <name>Ca(2+)</name>
        <dbReference type="ChEBI" id="CHEBI:29108"/>
        <label>1</label>
    </ligand>
</feature>
<feature type="binding site" evidence="1">
    <location>
        <position position="411"/>
    </location>
    <ligand>
        <name>Ca(2+)</name>
        <dbReference type="ChEBI" id="CHEBI:29108"/>
        <label>1</label>
    </ligand>
</feature>
<feature type="binding site" evidence="1">
    <location>
        <position position="413"/>
    </location>
    <ligand>
        <name>Ca(2+)</name>
        <dbReference type="ChEBI" id="CHEBI:29108"/>
        <label>1</label>
    </ligand>
</feature>
<feature type="binding site" evidence="1">
    <location>
        <position position="416"/>
    </location>
    <ligand>
        <name>Ca(2+)</name>
        <dbReference type="ChEBI" id="CHEBI:29108"/>
        <label>1</label>
    </ligand>
</feature>
<feature type="binding site" evidence="1">
    <location>
        <position position="419"/>
    </location>
    <ligand>
        <name>Ca(2+)</name>
        <dbReference type="ChEBI" id="CHEBI:29108"/>
        <label>1</label>
    </ligand>
</feature>
<feature type="binding site" evidence="1">
    <location>
        <position position="470"/>
    </location>
    <ligand>
        <name>Ca(2+)</name>
        <dbReference type="ChEBI" id="CHEBI:29108"/>
        <label>2</label>
    </ligand>
</feature>
<feature type="binding site" evidence="1">
    <location>
        <position position="471"/>
    </location>
    <ligand>
        <name>Ca(2+)</name>
        <dbReference type="ChEBI" id="CHEBI:29108"/>
        <label>2</label>
    </ligand>
</feature>
<feature type="binding site" evidence="1">
    <location>
        <position position="473"/>
    </location>
    <ligand>
        <name>Ca(2+)</name>
        <dbReference type="ChEBI" id="CHEBI:29108"/>
        <label>2</label>
    </ligand>
</feature>
<feature type="binding site" evidence="1">
    <location>
        <position position="484"/>
    </location>
    <ligand>
        <name>Ca(2+)</name>
        <dbReference type="ChEBI" id="CHEBI:29108"/>
        <label>2</label>
    </ligand>
</feature>
<feature type="binding site" evidence="1">
    <location>
        <position position="485"/>
    </location>
    <ligand>
        <name>Ca(2+)</name>
        <dbReference type="ChEBI" id="CHEBI:29108"/>
        <label>2</label>
    </ligand>
</feature>
<feature type="glycosylation site" description="N-linked (GlcNAc...) asparagine" evidence="2">
    <location>
        <position position="219"/>
    </location>
</feature>
<feature type="glycosylation site" description="N-linked (GlcNAc...) asparagine" evidence="2">
    <location>
        <position position="502"/>
    </location>
</feature>
<feature type="glycosylation site" description="N-linked (GlcNAc...) asparagine" evidence="2">
    <location>
        <position position="609"/>
    </location>
</feature>
<feature type="disulfide bond" evidence="1">
    <location>
        <begin position="311"/>
        <end position="391"/>
    </location>
</feature>
<feature type="disulfide bond" evidence="1">
    <location>
        <begin position="351"/>
        <end position="375"/>
    </location>
</feature>
<feature type="disulfide bond" evidence="1">
    <location>
        <begin position="353"/>
        <end position="358"/>
    </location>
</feature>
<feature type="disulfide bond" description="Interchain (with C-366)" evidence="3 4">
    <location>
        <position position="366"/>
    </location>
</feature>
<feature type="disulfide bond" evidence="1">
    <location>
        <begin position="407"/>
        <end position="436"/>
    </location>
</feature>
<feature type="disulfide bond" evidence="1">
    <location>
        <begin position="418"/>
        <end position="431"/>
    </location>
</feature>
<feature type="disulfide bond" evidence="1">
    <location>
        <begin position="420"/>
        <end position="426"/>
    </location>
</feature>
<feature type="disulfide bond" evidence="1">
    <location>
        <begin position="430"/>
        <end position="453"/>
    </location>
</feature>
<feature type="disulfide bond" evidence="1">
    <location>
        <begin position="444"/>
        <end position="450"/>
    </location>
</feature>
<feature type="disulfide bond" evidence="1">
    <location>
        <begin position="449"/>
        <end position="475"/>
    </location>
</feature>
<feature type="disulfide bond" evidence="1">
    <location>
        <begin position="462"/>
        <end position="482"/>
    </location>
</feature>
<feature type="disulfide bond" evidence="1">
    <location>
        <begin position="469"/>
        <end position="500"/>
    </location>
</feature>
<feature type="disulfide bond" evidence="1">
    <location>
        <begin position="493"/>
        <end position="505"/>
    </location>
</feature>
<feature type="disulfide bond" evidence="1">
    <location>
        <begin position="512"/>
        <end position="562"/>
    </location>
</feature>
<feature type="disulfide bond" evidence="1">
    <location>
        <begin position="527"/>
        <end position="573"/>
    </location>
</feature>
<feature type="disulfide bond" evidence="1">
    <location>
        <begin position="540"/>
        <end position="550"/>
    </location>
</feature>
<feature type="disulfide bond" evidence="1">
    <location>
        <begin position="557"/>
        <end position="599"/>
    </location>
</feature>
<feature type="disulfide bond" evidence="1">
    <location>
        <begin position="593"/>
        <end position="605"/>
    </location>
</feature>
<feature type="sequence conflict" description="In Ref. 1; AA sequence." evidence="7" ref="1">
    <original>Q</original>
    <variation>L</variation>
    <location>
        <position position="236"/>
    </location>
</feature>
<dbReference type="EC" id="3.4.24.-"/>
<dbReference type="EMBL" id="AB051849">
    <property type="protein sequence ID" value="BAB60682.1"/>
    <property type="molecule type" value="mRNA"/>
</dbReference>
<dbReference type="SMR" id="Q90ZI3"/>
<dbReference type="MEROPS" id="M12.315"/>
<dbReference type="GO" id="GO:0005576">
    <property type="term" value="C:extracellular region"/>
    <property type="evidence" value="ECO:0007669"/>
    <property type="project" value="UniProtKB-SubCell"/>
</dbReference>
<dbReference type="GO" id="GO:0005886">
    <property type="term" value="C:plasma membrane"/>
    <property type="evidence" value="ECO:0007669"/>
    <property type="project" value="TreeGrafter"/>
</dbReference>
<dbReference type="GO" id="GO:0046872">
    <property type="term" value="F:metal ion binding"/>
    <property type="evidence" value="ECO:0007669"/>
    <property type="project" value="UniProtKB-KW"/>
</dbReference>
<dbReference type="GO" id="GO:0004222">
    <property type="term" value="F:metalloendopeptidase activity"/>
    <property type="evidence" value="ECO:0007669"/>
    <property type="project" value="InterPro"/>
</dbReference>
<dbReference type="GO" id="GO:0016504">
    <property type="term" value="F:peptidase activator activity"/>
    <property type="evidence" value="ECO:0007669"/>
    <property type="project" value="UniProtKB-KW"/>
</dbReference>
<dbReference type="GO" id="GO:0090729">
    <property type="term" value="F:toxin activity"/>
    <property type="evidence" value="ECO:0007669"/>
    <property type="project" value="UniProtKB-KW"/>
</dbReference>
<dbReference type="GO" id="GO:0006915">
    <property type="term" value="P:apoptotic process"/>
    <property type="evidence" value="ECO:0007669"/>
    <property type="project" value="UniProtKB-KW"/>
</dbReference>
<dbReference type="GO" id="GO:0006508">
    <property type="term" value="P:proteolysis"/>
    <property type="evidence" value="ECO:0007669"/>
    <property type="project" value="UniProtKB-KW"/>
</dbReference>
<dbReference type="CDD" id="cd04269">
    <property type="entry name" value="ZnMc_adamalysin_II_like"/>
    <property type="match status" value="1"/>
</dbReference>
<dbReference type="FunFam" id="3.40.390.10:FF:000002">
    <property type="entry name" value="Disintegrin and metalloproteinase domain-containing protein 22"/>
    <property type="match status" value="1"/>
</dbReference>
<dbReference type="FunFam" id="4.10.70.10:FF:000001">
    <property type="entry name" value="Disintegrin and metalloproteinase domain-containing protein 22"/>
    <property type="match status" value="1"/>
</dbReference>
<dbReference type="Gene3D" id="3.40.390.10">
    <property type="entry name" value="Collagenase (Catalytic Domain)"/>
    <property type="match status" value="1"/>
</dbReference>
<dbReference type="Gene3D" id="4.10.70.10">
    <property type="entry name" value="Disintegrin domain"/>
    <property type="match status" value="1"/>
</dbReference>
<dbReference type="InterPro" id="IPR006586">
    <property type="entry name" value="ADAM_Cys-rich"/>
</dbReference>
<dbReference type="InterPro" id="IPR018358">
    <property type="entry name" value="Disintegrin_CS"/>
</dbReference>
<dbReference type="InterPro" id="IPR001762">
    <property type="entry name" value="Disintegrin_dom"/>
</dbReference>
<dbReference type="InterPro" id="IPR036436">
    <property type="entry name" value="Disintegrin_dom_sf"/>
</dbReference>
<dbReference type="InterPro" id="IPR024079">
    <property type="entry name" value="MetalloPept_cat_dom_sf"/>
</dbReference>
<dbReference type="InterPro" id="IPR001590">
    <property type="entry name" value="Peptidase_M12B"/>
</dbReference>
<dbReference type="InterPro" id="IPR002870">
    <property type="entry name" value="Peptidase_M12B_N"/>
</dbReference>
<dbReference type="InterPro" id="IPR034027">
    <property type="entry name" value="Reprolysin_adamalysin"/>
</dbReference>
<dbReference type="PANTHER" id="PTHR11905">
    <property type="entry name" value="ADAM A DISINTEGRIN AND METALLOPROTEASE DOMAIN"/>
    <property type="match status" value="1"/>
</dbReference>
<dbReference type="PANTHER" id="PTHR11905:SF32">
    <property type="entry name" value="DISINTEGRIN AND METALLOPROTEINASE DOMAIN-CONTAINING PROTEIN 28"/>
    <property type="match status" value="1"/>
</dbReference>
<dbReference type="Pfam" id="PF08516">
    <property type="entry name" value="ADAM_CR"/>
    <property type="match status" value="1"/>
</dbReference>
<dbReference type="Pfam" id="PF00200">
    <property type="entry name" value="Disintegrin"/>
    <property type="match status" value="1"/>
</dbReference>
<dbReference type="Pfam" id="PF01562">
    <property type="entry name" value="Pep_M12B_propep"/>
    <property type="match status" value="1"/>
</dbReference>
<dbReference type="Pfam" id="PF01421">
    <property type="entry name" value="Reprolysin"/>
    <property type="match status" value="1"/>
</dbReference>
<dbReference type="PRINTS" id="PR00289">
    <property type="entry name" value="DISINTEGRIN"/>
</dbReference>
<dbReference type="SMART" id="SM00608">
    <property type="entry name" value="ACR"/>
    <property type="match status" value="1"/>
</dbReference>
<dbReference type="SMART" id="SM00050">
    <property type="entry name" value="DISIN"/>
    <property type="match status" value="1"/>
</dbReference>
<dbReference type="SUPFAM" id="SSF57552">
    <property type="entry name" value="Blood coagulation inhibitor (disintegrin)"/>
    <property type="match status" value="1"/>
</dbReference>
<dbReference type="SUPFAM" id="SSF55486">
    <property type="entry name" value="Metalloproteases ('zincins'), catalytic domain"/>
    <property type="match status" value="1"/>
</dbReference>
<dbReference type="PROSITE" id="PS50215">
    <property type="entry name" value="ADAM_MEPRO"/>
    <property type="match status" value="1"/>
</dbReference>
<dbReference type="PROSITE" id="PS00427">
    <property type="entry name" value="DISINTEGRIN_1"/>
    <property type="match status" value="1"/>
</dbReference>
<dbReference type="PROSITE" id="PS50214">
    <property type="entry name" value="DISINTEGRIN_2"/>
    <property type="match status" value="1"/>
</dbReference>
<dbReference type="PROSITE" id="PS00142">
    <property type="entry name" value="ZINC_PROTEASE"/>
    <property type="match status" value="1"/>
</dbReference>
<proteinExistence type="evidence at protein level"/>
<organism>
    <name type="scientific">Protobothrops flavoviridis</name>
    <name type="common">Habu</name>
    <name type="synonym">Trimeresurus flavoviridis</name>
    <dbReference type="NCBI Taxonomy" id="88087"/>
    <lineage>
        <taxon>Eukaryota</taxon>
        <taxon>Metazoa</taxon>
        <taxon>Chordata</taxon>
        <taxon>Craniata</taxon>
        <taxon>Vertebrata</taxon>
        <taxon>Euteleostomi</taxon>
        <taxon>Lepidosauria</taxon>
        <taxon>Squamata</taxon>
        <taxon>Bifurcata</taxon>
        <taxon>Unidentata</taxon>
        <taxon>Episquamata</taxon>
        <taxon>Toxicofera</taxon>
        <taxon>Serpentes</taxon>
        <taxon>Colubroidea</taxon>
        <taxon>Viperidae</taxon>
        <taxon>Crotalinae</taxon>
        <taxon>Protobothrops</taxon>
    </lineage>
</organism>
<accession>Q90ZI3</accession>
<protein>
    <recommendedName>
        <fullName>Zinc metalloproteinase-disintegrin-like HV1</fullName>
        <ecNumber>3.4.24.-</ecNumber>
    </recommendedName>
    <alternativeName>
        <fullName>Snake venom metalloproteinase</fullName>
        <shortName>SVMP</shortName>
    </alternativeName>
    <alternativeName>
        <fullName>Vascular apoptosis-inducing protein</fullName>
        <shortName>VAP</shortName>
    </alternativeName>
</protein>
<reference key="1">
    <citation type="journal article" date="2001" name="Eur. J. Biochem.">
        <title>Purification, cDNA cloning and characterization of the vascular apoptosis-inducing protein, HV1, from Trimeresurus flavoviridis.</title>
        <authorList>
            <person name="Masuda S."/>
            <person name="Hayashi H."/>
            <person name="Atoda H."/>
            <person name="Morita T."/>
            <person name="Araki S."/>
        </authorList>
    </citation>
    <scope>NUCLEOTIDE SEQUENCE [MRNA]</scope>
    <scope>PROTEIN SEQUENCE OF 189-195; 227-248; 471-483 AND 508-529</scope>
    <scope>FUNCTION</scope>
    <scope>ACTIVITY REGULATION</scope>
    <scope>SUBUNIT</scope>
    <scope>SUBCELLULAR LOCATION</scope>
    <scope>TISSUE SPECIFICITY</scope>
    <scope>TOXIC DOSE</scope>
    <source>
        <tissue>Venom</tissue>
        <tissue>Venom gland</tissue>
    </source>
</reference>
<evidence type="ECO:0000250" key="1"/>
<evidence type="ECO:0000255" key="2"/>
<evidence type="ECO:0000255" key="3">
    <source>
        <dbReference type="PROSITE-ProRule" id="PRU00068"/>
    </source>
</evidence>
<evidence type="ECO:0000255" key="4">
    <source>
        <dbReference type="PROSITE-ProRule" id="PRU00276"/>
    </source>
</evidence>
<evidence type="ECO:0000255" key="5">
    <source>
        <dbReference type="PROSITE-ProRule" id="PRU10095"/>
    </source>
</evidence>
<evidence type="ECO:0000269" key="6">
    <source>
    </source>
</evidence>
<evidence type="ECO:0000305" key="7"/>
<keyword id="KW-0053">Apoptosis</keyword>
<keyword id="KW-1204">Blood coagulation cascade activating toxin</keyword>
<keyword id="KW-0106">Calcium</keyword>
<keyword id="KW-1217">Cell adhesion impairing toxin</keyword>
<keyword id="KW-0903">Direct protein sequencing</keyword>
<keyword id="KW-1015">Disulfide bond</keyword>
<keyword id="KW-1206">Fibrinogenolytic toxin</keyword>
<keyword id="KW-1205">Fibrinolytic toxin</keyword>
<keyword id="KW-0325">Glycoprotein</keyword>
<keyword id="KW-1199">Hemostasis impairing toxin</keyword>
<keyword id="KW-0378">Hydrolase</keyword>
<keyword id="KW-0479">Metal-binding</keyword>
<keyword id="KW-0482">Metalloprotease</keyword>
<keyword id="KW-0645">Protease</keyword>
<keyword id="KW-0655">Prothrombin activator</keyword>
<keyword id="KW-0964">Secreted</keyword>
<keyword id="KW-0732">Signal</keyword>
<keyword id="KW-0800">Toxin</keyword>
<keyword id="KW-0862">Zinc</keyword>
<keyword id="KW-0865">Zymogen</keyword>
<name>VM3H1_PROFL</name>
<comment type="function">
    <text evidence="1 6">Snake venom zinc metalloproteinase-disintegrin-like that potently activates prothrombin (F2). Does not elicit any hemorrhagic response. Barely inhibits collagen-induced platelet aggregation. Hydrolyzes the alpha-chain of fibrin and fibrinogen (FGA), without affecting the Bbeta- and gamma-chains (By similarity). Induces apoptosis in cultured vascular endothelial cells.</text>
</comment>
<comment type="cofactor">
    <cofactor evidence="1">
        <name>Zn(2+)</name>
        <dbReference type="ChEBI" id="CHEBI:29105"/>
    </cofactor>
    <text evidence="1">Binds 1 zinc ion per subunit.</text>
</comment>
<comment type="activity regulation">
    <text evidence="6">Inhibited by EDTA and EGTA.</text>
</comment>
<comment type="subunit">
    <text evidence="6">Homodimer; disulfide-linked.</text>
</comment>
<comment type="subcellular location">
    <subcellularLocation>
        <location evidence="6">Secreted</location>
    </subcellularLocation>
</comment>
<comment type="tissue specificity">
    <text evidence="6">Expressed by the venom gland.</text>
</comment>
<comment type="toxic dose">
    <text evidence="6">LD(50) is 0.2 ug/mL on cultured vascular endothelial cells.</text>
</comment>
<comment type="similarity">
    <text evidence="7">Belongs to the venom metalloproteinase (M12B) family. P-III subfamily. P-IIIc sub-subfamily.</text>
</comment>
<sequence length="612" mass="68191">MIQVLLVTICLAVFPYQGSSIILESGNVNDYEVVYPRKVTALPKGAVQQKYEDAMQYEFTVNGEPVVLHLEKNKGLFSEDYSETHYSPDGREITTNPPVEDHCYYHGRIQNDADLTASISACDGLKGHFKLQGETYIIEPLKLPDSEAHAVFKYENVEKEDEAPKMCGVTQSNWESDESIKEDSQSNLTPAQQKYLNAKKYVKFFLVADHIMYLKYGRNLTTLRTRMFDTVNIVNQILQRINIHVALIGIEIWSKEDKIIVQSVPDVTLKLFATWRESVLLKRKNHDNAHLLTGINFNGPTAGLAYLGGICKPMYSAGIVQDHNKIHHLVAIAMAHEMGHNLGMDHDKDTCTCRAKACVMAGTLSCDASYLFSDCSRQEHRAFLIKNMPQCILKKPLKTDVVSPPVCGNYFVEVGEDCDCGSPATCRDPCCDAATCKLRQGAQCAEGLCCDQCRFKAAGTECRAATDECDMADLCTGRSAECTDRFQRNGQPCQNNNGYCYNRTCPTMNNQCIALFGPNAAVSQDACFQFNRQGNYYGYCRKEQNTKIACEPQNVKCGRLYCIDSSPAKKNPCNIIYSPNDEDKGMVLPGTKCADGMACNSNGQCVDVNRTY</sequence>